<organism>
    <name type="scientific">Staphylococcus epidermidis (strain ATCC 12228 / FDA PCI 1200)</name>
    <dbReference type="NCBI Taxonomy" id="176280"/>
    <lineage>
        <taxon>Bacteria</taxon>
        <taxon>Bacillati</taxon>
        <taxon>Bacillota</taxon>
        <taxon>Bacilli</taxon>
        <taxon>Bacillales</taxon>
        <taxon>Staphylococcaceae</taxon>
        <taxon>Staphylococcus</taxon>
    </lineage>
</organism>
<feature type="chain" id="PRO_0000312190" description="Putative 2-hydroxyacid dehydrogenase SE_1879">
    <location>
        <begin position="1"/>
        <end position="317"/>
    </location>
</feature>
<feature type="active site" evidence="1">
    <location>
        <position position="236"/>
    </location>
</feature>
<feature type="active site" evidence="1">
    <location>
        <position position="265"/>
    </location>
</feature>
<feature type="active site" description="Proton donor" evidence="1">
    <location>
        <position position="283"/>
    </location>
</feature>
<feature type="binding site" evidence="1">
    <location>
        <begin position="155"/>
        <end position="156"/>
    </location>
    <ligand>
        <name>NAD(+)</name>
        <dbReference type="ChEBI" id="CHEBI:57540"/>
    </ligand>
</feature>
<feature type="binding site" evidence="1">
    <location>
        <begin position="234"/>
        <end position="236"/>
    </location>
    <ligand>
        <name>NAD(+)</name>
        <dbReference type="ChEBI" id="CHEBI:57540"/>
    </ligand>
</feature>
<feature type="binding site" evidence="1">
    <location>
        <position position="260"/>
    </location>
    <ligand>
        <name>NAD(+)</name>
        <dbReference type="ChEBI" id="CHEBI:57540"/>
    </ligand>
</feature>
<feature type="binding site" evidence="1">
    <location>
        <begin position="283"/>
        <end position="286"/>
    </location>
    <ligand>
        <name>NAD(+)</name>
        <dbReference type="ChEBI" id="CHEBI:57540"/>
    </ligand>
</feature>
<gene>
    <name type="ordered locus">SE_1879</name>
</gene>
<accession>Q8CNB8</accession>
<proteinExistence type="inferred from homology"/>
<name>Y1879_STAES</name>
<sequence length="317" mass="34750">MTKVYIAGAIPEVGLNLLKEHFEVDMYDGEGLIDKETLKKGVEHADALVSLLSTSVDKDIIDSANNLKIIANYGAGFNNIDVEYARQQNIDVTNTPHASTNATADLTIGLILSVARRIVEGDHLSRTTGFDGWAPLFFRGREVSGKTIGIIGLGEIGGAVAKRARAFDMDVLYTGPHRKEEKERDIGAKYVDLDTLLKNADFITINAAYNPSLHHMIDTEQFNKMKSTAYLINAGRGPIVNEQSLVEALDNKVIEGAALDVYEFEPEITDALKSFKNVVLTPHIGNATFEARDMMAKIVANDTIKKLNGDEPQFIVN</sequence>
<comment type="similarity">
    <text evidence="2">Belongs to the D-isomer specific 2-hydroxyacid dehydrogenase family.</text>
</comment>
<reference key="1">
    <citation type="journal article" date="2003" name="Mol. Microbiol.">
        <title>Genome-based analysis of virulence genes in a non-biofilm-forming Staphylococcus epidermidis strain (ATCC 12228).</title>
        <authorList>
            <person name="Zhang Y.-Q."/>
            <person name="Ren S.-X."/>
            <person name="Li H.-L."/>
            <person name="Wang Y.-X."/>
            <person name="Fu G."/>
            <person name="Yang J."/>
            <person name="Qin Z.-Q."/>
            <person name="Miao Y.-G."/>
            <person name="Wang W.-Y."/>
            <person name="Chen R.-S."/>
            <person name="Shen Y."/>
            <person name="Chen Z."/>
            <person name="Yuan Z.-H."/>
            <person name="Zhao G.-P."/>
            <person name="Qu D."/>
            <person name="Danchin A."/>
            <person name="Wen Y.-M."/>
        </authorList>
    </citation>
    <scope>NUCLEOTIDE SEQUENCE [LARGE SCALE GENOMIC DNA]</scope>
    <source>
        <strain>ATCC 12228 / FDA PCI 1200</strain>
    </source>
</reference>
<protein>
    <recommendedName>
        <fullName>Putative 2-hydroxyacid dehydrogenase SE_1879</fullName>
        <ecNumber>1.1.1.-</ecNumber>
    </recommendedName>
</protein>
<dbReference type="EC" id="1.1.1.-"/>
<dbReference type="EMBL" id="AE015929">
    <property type="protein sequence ID" value="AAO05520.1"/>
    <property type="molecule type" value="Genomic_DNA"/>
</dbReference>
<dbReference type="RefSeq" id="NP_765434.1">
    <property type="nucleotide sequence ID" value="NC_004461.1"/>
</dbReference>
<dbReference type="RefSeq" id="WP_002477137.1">
    <property type="nucleotide sequence ID" value="NZ_WBME01000032.1"/>
</dbReference>
<dbReference type="SMR" id="Q8CNB8"/>
<dbReference type="KEGG" id="sep:SE_1879"/>
<dbReference type="PATRIC" id="fig|176280.10.peg.1836"/>
<dbReference type="eggNOG" id="COG1052">
    <property type="taxonomic scope" value="Bacteria"/>
</dbReference>
<dbReference type="HOGENOM" id="CLU_019796_1_2_9"/>
<dbReference type="OrthoDB" id="9805416at2"/>
<dbReference type="Proteomes" id="UP000001411">
    <property type="component" value="Chromosome"/>
</dbReference>
<dbReference type="GO" id="GO:0051287">
    <property type="term" value="F:NAD binding"/>
    <property type="evidence" value="ECO:0007669"/>
    <property type="project" value="InterPro"/>
</dbReference>
<dbReference type="GO" id="GO:0016616">
    <property type="term" value="F:oxidoreductase activity, acting on the CH-OH group of donors, NAD or NADP as acceptor"/>
    <property type="evidence" value="ECO:0007669"/>
    <property type="project" value="InterPro"/>
</dbReference>
<dbReference type="CDD" id="cd12178">
    <property type="entry name" value="2-Hacid_dh_13"/>
    <property type="match status" value="1"/>
</dbReference>
<dbReference type="FunFam" id="3.40.50.720:FF:000462">
    <property type="entry name" value="Glyoxylate reductase (NADP+)"/>
    <property type="match status" value="1"/>
</dbReference>
<dbReference type="Gene3D" id="3.40.50.720">
    <property type="entry name" value="NAD(P)-binding Rossmann-like Domain"/>
    <property type="match status" value="2"/>
</dbReference>
<dbReference type="InterPro" id="IPR050857">
    <property type="entry name" value="D-2-hydroxyacid_DH"/>
</dbReference>
<dbReference type="InterPro" id="IPR006139">
    <property type="entry name" value="D-isomer_2_OHA_DH_cat_dom"/>
</dbReference>
<dbReference type="InterPro" id="IPR029753">
    <property type="entry name" value="D-isomer_DH_CS"/>
</dbReference>
<dbReference type="InterPro" id="IPR006140">
    <property type="entry name" value="D-isomer_DH_NAD-bd"/>
</dbReference>
<dbReference type="InterPro" id="IPR036291">
    <property type="entry name" value="NAD(P)-bd_dom_sf"/>
</dbReference>
<dbReference type="PANTHER" id="PTHR42789">
    <property type="entry name" value="D-ISOMER SPECIFIC 2-HYDROXYACID DEHYDROGENASE FAMILY PROTEIN (AFU_ORTHOLOGUE AFUA_6G10090)"/>
    <property type="match status" value="1"/>
</dbReference>
<dbReference type="PANTHER" id="PTHR42789:SF1">
    <property type="entry name" value="D-ISOMER SPECIFIC 2-HYDROXYACID DEHYDROGENASE FAMILY PROTEIN (AFU_ORTHOLOGUE AFUA_6G10090)"/>
    <property type="match status" value="1"/>
</dbReference>
<dbReference type="Pfam" id="PF00389">
    <property type="entry name" value="2-Hacid_dh"/>
    <property type="match status" value="1"/>
</dbReference>
<dbReference type="Pfam" id="PF02826">
    <property type="entry name" value="2-Hacid_dh_C"/>
    <property type="match status" value="1"/>
</dbReference>
<dbReference type="SUPFAM" id="SSF52283">
    <property type="entry name" value="Formate/glycerate dehydrogenase catalytic domain-like"/>
    <property type="match status" value="1"/>
</dbReference>
<dbReference type="SUPFAM" id="SSF51735">
    <property type="entry name" value="NAD(P)-binding Rossmann-fold domains"/>
    <property type="match status" value="1"/>
</dbReference>
<dbReference type="PROSITE" id="PS00671">
    <property type="entry name" value="D_2_HYDROXYACID_DH_3"/>
    <property type="match status" value="1"/>
</dbReference>
<evidence type="ECO:0000250" key="1"/>
<evidence type="ECO:0000305" key="2"/>
<keyword id="KW-0520">NAD</keyword>
<keyword id="KW-0560">Oxidoreductase</keyword>